<sequence length="511" mass="55705">MEKNKRAIGFLLLVVLINGVMMTRSNGYEGEEEWGGAGGGEWGGAEGGGAWGGGGGGGGAWGGEGEGGGEWGGGGEGGGGGRRGWFMMRESRQVIKSEGGEMRVVLSPRGRIIEKPMHIGFLTMEPKTLFVPQYLDSSLLIFIRQGEATLGVICKDEFGERKLKAGDIYWIPAGSVFYLHNTGLGQRLHVICSIDPTQSLGFETFQPFYIGGGPSSVLAGFDPHTLTSAFNVSLPELQQMMMSQFRGPIVYVTEGPQPQPQSTVWTQFLGLRGEEKHKQLKKLLETKQGSPQDQQYSSGWSWRNIVRSILDLTEEKNKGSGSSECEDSYNIYDKKDKPSFDNKYGWSIALDYDDYKPLKHSGIGVYLVNLTAGAMMAPHMNPTATEYGIVLAGSGEIQVVFPNGTSAMNTRVSVGDVFWIPRYFAFCQIASRTGPFEFVGFTTSAHKNRPQFLVGSNSLLRTLNLTSLSIAFGVDEETMRRFIEAQREAVILPTPAAAPPHVGEMVSDRFV</sequence>
<keyword id="KW-0325">Glycoprotein</keyword>
<keyword id="KW-1185">Reference proteome</keyword>
<keyword id="KW-0732">Signal</keyword>
<feature type="signal peptide" evidence="1">
    <location>
        <begin position="1"/>
        <end position="27"/>
    </location>
</feature>
<feature type="chain" id="PRO_5004337157" description="Vicilin-like seed storage protein At2g28490" evidence="1">
    <location>
        <begin position="28"/>
        <end position="511"/>
    </location>
</feature>
<feature type="domain" description="Cupin type-1 1" evidence="1">
    <location>
        <begin position="86"/>
        <end position="238"/>
    </location>
</feature>
<feature type="domain" description="Cupin type-1 2" evidence="1">
    <location>
        <begin position="329"/>
        <end position="480"/>
    </location>
</feature>
<feature type="region of interest" description="Disordered" evidence="3">
    <location>
        <begin position="54"/>
        <end position="81"/>
    </location>
</feature>
<feature type="glycosylation site" description="N-linked (GlcNAc...) asparagine" evidence="2">
    <location>
        <position position="231"/>
    </location>
</feature>
<feature type="glycosylation site" description="N-linked (GlcNAc...) asparagine" evidence="2">
    <location>
        <position position="369"/>
    </location>
</feature>
<feature type="glycosylation site" description="N-linked (GlcNAc...) asparagine" evidence="2">
    <location>
        <position position="403"/>
    </location>
</feature>
<feature type="glycosylation site" description="N-linked (GlcNAc...) asparagine" evidence="2">
    <location>
        <position position="464"/>
    </location>
</feature>
<organism>
    <name type="scientific">Arabidopsis thaliana</name>
    <name type="common">Mouse-ear cress</name>
    <dbReference type="NCBI Taxonomy" id="3702"/>
    <lineage>
        <taxon>Eukaryota</taxon>
        <taxon>Viridiplantae</taxon>
        <taxon>Streptophyta</taxon>
        <taxon>Embryophyta</taxon>
        <taxon>Tracheophyta</taxon>
        <taxon>Spermatophyta</taxon>
        <taxon>Magnoliopsida</taxon>
        <taxon>eudicotyledons</taxon>
        <taxon>Gunneridae</taxon>
        <taxon>Pentapetalae</taxon>
        <taxon>rosids</taxon>
        <taxon>malvids</taxon>
        <taxon>Brassicales</taxon>
        <taxon>Brassicaceae</taxon>
        <taxon>Camelineae</taxon>
        <taxon>Arabidopsis</taxon>
    </lineage>
</organism>
<proteinExistence type="evidence at transcript level"/>
<protein>
    <recommendedName>
        <fullName>Vicilin-like seed storage protein At2g28490</fullName>
    </recommendedName>
    <alternativeName>
        <fullName>Globulin At2g28490</fullName>
    </alternativeName>
</protein>
<name>VCL22_ARATH</name>
<accession>Q9SK09</accession>
<reference key="1">
    <citation type="journal article" date="1999" name="Nature">
        <title>Sequence and analysis of chromosome 2 of the plant Arabidopsis thaliana.</title>
        <authorList>
            <person name="Lin X."/>
            <person name="Kaul S."/>
            <person name="Rounsley S.D."/>
            <person name="Shea T.P."/>
            <person name="Benito M.-I."/>
            <person name="Town C.D."/>
            <person name="Fujii C.Y."/>
            <person name="Mason T.M."/>
            <person name="Bowman C.L."/>
            <person name="Barnstead M.E."/>
            <person name="Feldblyum T.V."/>
            <person name="Buell C.R."/>
            <person name="Ketchum K.A."/>
            <person name="Lee J.J."/>
            <person name="Ronning C.M."/>
            <person name="Koo H.L."/>
            <person name="Moffat K.S."/>
            <person name="Cronin L.A."/>
            <person name="Shen M."/>
            <person name="Pai G."/>
            <person name="Van Aken S."/>
            <person name="Umayam L."/>
            <person name="Tallon L.J."/>
            <person name="Gill J.E."/>
            <person name="Adams M.D."/>
            <person name="Carrera A.J."/>
            <person name="Creasy T.H."/>
            <person name="Goodman H.M."/>
            <person name="Somerville C.R."/>
            <person name="Copenhaver G.P."/>
            <person name="Preuss D."/>
            <person name="Nierman W.C."/>
            <person name="White O."/>
            <person name="Eisen J.A."/>
            <person name="Salzberg S.L."/>
            <person name="Fraser C.M."/>
            <person name="Venter J.C."/>
        </authorList>
    </citation>
    <scope>NUCLEOTIDE SEQUENCE [LARGE SCALE GENOMIC DNA]</scope>
    <source>
        <strain>cv. Columbia</strain>
    </source>
</reference>
<reference key="2">
    <citation type="journal article" date="2017" name="Plant J.">
        <title>Araport11: a complete reannotation of the Arabidopsis thaliana reference genome.</title>
        <authorList>
            <person name="Cheng C.Y."/>
            <person name="Krishnakumar V."/>
            <person name="Chan A.P."/>
            <person name="Thibaud-Nissen F."/>
            <person name="Schobel S."/>
            <person name="Town C.D."/>
        </authorList>
    </citation>
    <scope>GENOME REANNOTATION</scope>
    <source>
        <strain>cv. Columbia</strain>
    </source>
</reference>
<reference key="3">
    <citation type="journal article" date="2003" name="Science">
        <title>Empirical analysis of transcriptional activity in the Arabidopsis genome.</title>
        <authorList>
            <person name="Yamada K."/>
            <person name="Lim J."/>
            <person name="Dale J.M."/>
            <person name="Chen H."/>
            <person name="Shinn P."/>
            <person name="Palm C.J."/>
            <person name="Southwick A.M."/>
            <person name="Wu H.C."/>
            <person name="Kim C.J."/>
            <person name="Nguyen M."/>
            <person name="Pham P.K."/>
            <person name="Cheuk R.F."/>
            <person name="Karlin-Newmann G."/>
            <person name="Liu S.X."/>
            <person name="Lam B."/>
            <person name="Sakano H."/>
            <person name="Wu T."/>
            <person name="Yu G."/>
            <person name="Miranda M."/>
            <person name="Quach H.L."/>
            <person name="Tripp M."/>
            <person name="Chang C.H."/>
            <person name="Lee J.M."/>
            <person name="Toriumi M.J."/>
            <person name="Chan M.M."/>
            <person name="Tang C.C."/>
            <person name="Onodera C.S."/>
            <person name="Deng J.M."/>
            <person name="Akiyama K."/>
            <person name="Ansari Y."/>
            <person name="Arakawa T."/>
            <person name="Banh J."/>
            <person name="Banno F."/>
            <person name="Bowser L."/>
            <person name="Brooks S.Y."/>
            <person name="Carninci P."/>
            <person name="Chao Q."/>
            <person name="Choy N."/>
            <person name="Enju A."/>
            <person name="Goldsmith A.D."/>
            <person name="Gurjal M."/>
            <person name="Hansen N.F."/>
            <person name="Hayashizaki Y."/>
            <person name="Johnson-Hopson C."/>
            <person name="Hsuan V.W."/>
            <person name="Iida K."/>
            <person name="Karnes M."/>
            <person name="Khan S."/>
            <person name="Koesema E."/>
            <person name="Ishida J."/>
            <person name="Jiang P.X."/>
            <person name="Jones T."/>
            <person name="Kawai J."/>
            <person name="Kamiya A."/>
            <person name="Meyers C."/>
            <person name="Nakajima M."/>
            <person name="Narusaka M."/>
            <person name="Seki M."/>
            <person name="Sakurai T."/>
            <person name="Satou M."/>
            <person name="Tamse R."/>
            <person name="Vaysberg M."/>
            <person name="Wallender E.K."/>
            <person name="Wong C."/>
            <person name="Yamamura Y."/>
            <person name="Yuan S."/>
            <person name="Shinozaki K."/>
            <person name="Davis R.W."/>
            <person name="Theologis A."/>
            <person name="Ecker J.R."/>
        </authorList>
    </citation>
    <scope>NUCLEOTIDE SEQUENCE [LARGE SCALE MRNA]</scope>
    <source>
        <strain>cv. Columbia</strain>
    </source>
</reference>
<reference key="4">
    <citation type="journal article" date="2002" name="Plant Cell">
        <title>Redundant proteolytic mechanisms process seed storage proteins in the absence of seed-type members of the vacuolar processing enzyme family of cysteine proteases.</title>
        <authorList>
            <person name="Gruis D.F."/>
            <person name="Selinger D.A."/>
            <person name="Curran J.M."/>
            <person name="Jung R."/>
        </authorList>
    </citation>
    <scope>GENE FAMILY</scope>
</reference>
<evidence type="ECO:0000255" key="1"/>
<evidence type="ECO:0000255" key="2">
    <source>
        <dbReference type="PROSITE-ProRule" id="PRU00498"/>
    </source>
</evidence>
<evidence type="ECO:0000256" key="3">
    <source>
        <dbReference type="SAM" id="MobiDB-lite"/>
    </source>
</evidence>
<evidence type="ECO:0000305" key="4"/>
<evidence type="ECO:0000312" key="5">
    <source>
        <dbReference type="Araport" id="AT2G28490"/>
    </source>
</evidence>
<evidence type="ECO:0000312" key="6">
    <source>
        <dbReference type="EMBL" id="AAD21484.1"/>
    </source>
</evidence>
<comment type="function">
    <text evidence="4">Seed storage protein.</text>
</comment>
<comment type="similarity">
    <text evidence="4">Belongs to the 7S seed storage protein family.</text>
</comment>
<dbReference type="EMBL" id="AC006587">
    <property type="protein sequence ID" value="AAD21484.1"/>
    <property type="molecule type" value="Genomic_DNA"/>
</dbReference>
<dbReference type="EMBL" id="CP002685">
    <property type="protein sequence ID" value="AEC08130.1"/>
    <property type="molecule type" value="Genomic_DNA"/>
</dbReference>
<dbReference type="EMBL" id="BT008623">
    <property type="protein sequence ID" value="AAP40444.1"/>
    <property type="molecule type" value="mRNA"/>
</dbReference>
<dbReference type="PIR" id="E84685">
    <property type="entry name" value="E84685"/>
</dbReference>
<dbReference type="RefSeq" id="NP_180416.1">
    <property type="nucleotide sequence ID" value="NM_128409.2"/>
</dbReference>
<dbReference type="SMR" id="Q9SK09"/>
<dbReference type="FunCoup" id="Q9SK09">
    <property type="interactions" value="200"/>
</dbReference>
<dbReference type="STRING" id="3702.Q9SK09"/>
<dbReference type="GlyGen" id="Q9SK09">
    <property type="glycosylation" value="5 sites"/>
</dbReference>
<dbReference type="iPTMnet" id="Q9SK09"/>
<dbReference type="PaxDb" id="3702-AT2G28490.1"/>
<dbReference type="ProMEX" id="Q9SK09"/>
<dbReference type="ProteomicsDB" id="242329"/>
<dbReference type="EnsemblPlants" id="AT2G28490.1">
    <property type="protein sequence ID" value="AT2G28490.1"/>
    <property type="gene ID" value="AT2G28490"/>
</dbReference>
<dbReference type="GeneID" id="817397"/>
<dbReference type="Gramene" id="AT2G28490.1">
    <property type="protein sequence ID" value="AT2G28490.1"/>
    <property type="gene ID" value="AT2G28490"/>
</dbReference>
<dbReference type="KEGG" id="ath:AT2G28490"/>
<dbReference type="Araport" id="AT2G28490"/>
<dbReference type="TAIR" id="AT2G28490"/>
<dbReference type="eggNOG" id="ENOG502QRZP">
    <property type="taxonomic scope" value="Eukaryota"/>
</dbReference>
<dbReference type="HOGENOM" id="CLU_027536_0_0_1"/>
<dbReference type="InParanoid" id="Q9SK09"/>
<dbReference type="OMA" id="DKPMHIG"/>
<dbReference type="PhylomeDB" id="Q9SK09"/>
<dbReference type="PRO" id="PR:Q9SK09"/>
<dbReference type="Proteomes" id="UP000006548">
    <property type="component" value="Chromosome 2"/>
</dbReference>
<dbReference type="ExpressionAtlas" id="Q9SK09">
    <property type="expression patterns" value="baseline and differential"/>
</dbReference>
<dbReference type="GO" id="GO:0009506">
    <property type="term" value="C:plasmodesma"/>
    <property type="evidence" value="ECO:0007005"/>
    <property type="project" value="TAIR"/>
</dbReference>
<dbReference type="CDD" id="cd02245">
    <property type="entry name" value="cupin_7S_vicilin-like_C"/>
    <property type="match status" value="1"/>
</dbReference>
<dbReference type="CDD" id="cd02244">
    <property type="entry name" value="cupin_7S_vicilin-like_N"/>
    <property type="match status" value="1"/>
</dbReference>
<dbReference type="FunFam" id="2.60.120.10:FF:000073">
    <property type="entry name" value="Glycinin G1"/>
    <property type="match status" value="1"/>
</dbReference>
<dbReference type="Gene3D" id="2.60.120.10">
    <property type="entry name" value="Jelly Rolls"/>
    <property type="match status" value="2"/>
</dbReference>
<dbReference type="InterPro" id="IPR006045">
    <property type="entry name" value="Cupin_1"/>
</dbReference>
<dbReference type="InterPro" id="IPR014710">
    <property type="entry name" value="RmlC-like_jellyroll"/>
</dbReference>
<dbReference type="InterPro" id="IPR011051">
    <property type="entry name" value="RmlC_Cupin_sf"/>
</dbReference>
<dbReference type="InterPro" id="IPR050253">
    <property type="entry name" value="Seed_Storage-Functional"/>
</dbReference>
<dbReference type="PANTHER" id="PTHR31189">
    <property type="entry name" value="OS03G0336100 PROTEIN-RELATED"/>
    <property type="match status" value="1"/>
</dbReference>
<dbReference type="PANTHER" id="PTHR31189:SF2">
    <property type="entry name" value="RMLC-LIKE CUPINS SUPERFAMILY PROTEIN"/>
    <property type="match status" value="1"/>
</dbReference>
<dbReference type="Pfam" id="PF00190">
    <property type="entry name" value="Cupin_1"/>
    <property type="match status" value="2"/>
</dbReference>
<dbReference type="SMART" id="SM00835">
    <property type="entry name" value="Cupin_1"/>
    <property type="match status" value="2"/>
</dbReference>
<dbReference type="SUPFAM" id="SSF51182">
    <property type="entry name" value="RmlC-like cupins"/>
    <property type="match status" value="1"/>
</dbReference>
<gene>
    <name evidence="5" type="ordered locus">At2g28490</name>
    <name evidence="6" type="ORF">T17D12.5</name>
</gene>